<evidence type="ECO:0000255" key="1">
    <source>
        <dbReference type="HAMAP-Rule" id="MF_00340"/>
    </source>
</evidence>
<evidence type="ECO:0000305" key="2"/>
<name>RK32_NICSY</name>
<protein>
    <recommendedName>
        <fullName evidence="1">Large ribosomal subunit protein bL32c</fullName>
    </recommendedName>
    <alternativeName>
        <fullName evidence="2">50S ribosomal protein L32, chloroplastic</fullName>
    </alternativeName>
</protein>
<organism>
    <name type="scientific">Nicotiana sylvestris</name>
    <name type="common">Wood tobacco</name>
    <name type="synonym">South American tobacco</name>
    <dbReference type="NCBI Taxonomy" id="4096"/>
    <lineage>
        <taxon>Eukaryota</taxon>
        <taxon>Viridiplantae</taxon>
        <taxon>Streptophyta</taxon>
        <taxon>Embryophyta</taxon>
        <taxon>Tracheophyta</taxon>
        <taxon>Spermatophyta</taxon>
        <taxon>Magnoliopsida</taxon>
        <taxon>eudicotyledons</taxon>
        <taxon>Gunneridae</taxon>
        <taxon>Pentapetalae</taxon>
        <taxon>asterids</taxon>
        <taxon>lamiids</taxon>
        <taxon>Solanales</taxon>
        <taxon>Solanaceae</taxon>
        <taxon>Nicotianoideae</taxon>
        <taxon>Nicotianeae</taxon>
        <taxon>Nicotiana</taxon>
    </lineage>
</organism>
<keyword id="KW-0150">Chloroplast</keyword>
<keyword id="KW-0934">Plastid</keyword>
<keyword id="KW-1185">Reference proteome</keyword>
<keyword id="KW-0687">Ribonucleoprotein</keyword>
<keyword id="KW-0689">Ribosomal protein</keyword>
<gene>
    <name evidence="1" type="primary">rpl32</name>
</gene>
<sequence length="55" mass="6317">MAVPKKRTSTSKKRIRKNIWKRKGYSIALKAFSLAKSLSTGNSKSFFVRQTKINK</sequence>
<feature type="chain" id="PRO_0000276478" description="Large ribosomal subunit protein bL32c">
    <location>
        <begin position="1"/>
        <end position="55"/>
    </location>
</feature>
<reference key="1">
    <citation type="journal article" date="2006" name="Mol. Genet. Genomics">
        <title>The chloroplast genome of Nicotiana sylvestris and Nicotiana tomentosiformis: complete sequencing confirms that the Nicotiana sylvestris progenitor is the maternal genome donor of Nicotiana tabacum.</title>
        <authorList>
            <person name="Yukawa M."/>
            <person name="Tsudzuki T."/>
            <person name="Sugiura M."/>
        </authorList>
    </citation>
    <scope>NUCLEOTIDE SEQUENCE [LARGE SCALE GENOMIC DNA]</scope>
</reference>
<comment type="subcellular location">
    <subcellularLocation>
        <location>Plastid</location>
        <location>Chloroplast</location>
    </subcellularLocation>
</comment>
<comment type="similarity">
    <text evidence="1">Belongs to the bacterial ribosomal protein bL32 family.</text>
</comment>
<proteinExistence type="inferred from homology"/>
<dbReference type="EMBL" id="AB237912">
    <property type="protein sequence ID" value="BAE46712.1"/>
    <property type="molecule type" value="Genomic_DNA"/>
</dbReference>
<dbReference type="RefSeq" id="YP_358735.1">
    <property type="nucleotide sequence ID" value="NC_007500.1"/>
</dbReference>
<dbReference type="SMR" id="Q3C1N8"/>
<dbReference type="GeneID" id="3735086"/>
<dbReference type="KEGG" id="nsy:3735086"/>
<dbReference type="OrthoDB" id="31045at4085"/>
<dbReference type="Proteomes" id="UP000189701">
    <property type="component" value="Chloroplast Pltd"/>
</dbReference>
<dbReference type="GO" id="GO:0009507">
    <property type="term" value="C:chloroplast"/>
    <property type="evidence" value="ECO:0007669"/>
    <property type="project" value="UniProtKB-SubCell"/>
</dbReference>
<dbReference type="GO" id="GO:0015934">
    <property type="term" value="C:large ribosomal subunit"/>
    <property type="evidence" value="ECO:0007669"/>
    <property type="project" value="InterPro"/>
</dbReference>
<dbReference type="GO" id="GO:0003735">
    <property type="term" value="F:structural constituent of ribosome"/>
    <property type="evidence" value="ECO:0007669"/>
    <property type="project" value="InterPro"/>
</dbReference>
<dbReference type="GO" id="GO:0006412">
    <property type="term" value="P:translation"/>
    <property type="evidence" value="ECO:0007669"/>
    <property type="project" value="UniProtKB-UniRule"/>
</dbReference>
<dbReference type="HAMAP" id="MF_00340">
    <property type="entry name" value="Ribosomal_bL32"/>
    <property type="match status" value="1"/>
</dbReference>
<dbReference type="InterPro" id="IPR002677">
    <property type="entry name" value="Ribosomal_bL32"/>
</dbReference>
<dbReference type="InterPro" id="IPR044958">
    <property type="entry name" value="Ribosomal_bL32_plant/cyanobact"/>
</dbReference>
<dbReference type="InterPro" id="IPR011332">
    <property type="entry name" value="Ribosomal_zn-bd"/>
</dbReference>
<dbReference type="PANTHER" id="PTHR36083">
    <property type="entry name" value="50S RIBOSOMAL PROTEIN L32, CHLOROPLASTIC"/>
    <property type="match status" value="1"/>
</dbReference>
<dbReference type="PANTHER" id="PTHR36083:SF1">
    <property type="entry name" value="LARGE RIBOSOMAL SUBUNIT PROTEIN BL32C"/>
    <property type="match status" value="1"/>
</dbReference>
<dbReference type="Pfam" id="PF01783">
    <property type="entry name" value="Ribosomal_L32p"/>
    <property type="match status" value="1"/>
</dbReference>
<dbReference type="SUPFAM" id="SSF57829">
    <property type="entry name" value="Zn-binding ribosomal proteins"/>
    <property type="match status" value="1"/>
</dbReference>
<geneLocation type="chloroplast"/>
<accession>Q3C1N8</accession>